<feature type="chain" id="PRO_0000438363" description="ESX-1 secretion-associated protein EspG1">
    <location>
        <begin position="1"/>
        <end position="282"/>
    </location>
</feature>
<sequence length="282" mass="30582">MTAPFTAETGDAHIDDVVGVEVTIDGMLVIADKLGLTDFPPSMGIRLNIPQPDLRKVVWEQVERDLSAQGVLDVYGNPHPEVAAMVDTLARADRTLECRWWRRDAGGKMIRFVVCRKGGRHVVAARDNDLLVLQRVAPQIGLAGMVMTVLGEGSPANVEPLTGVADRLAQCRTAEELTGYGIPPTSARAYASIISEPDGWVEIVANERHPGGTTSQVDVAAGVLDAKQGRIVSIPRRVNGELYGSFLSGTKDNLERALEGLVEFLPSKTWFDKTDADNAYQH</sequence>
<organism>
    <name type="scientific">Mycolicibacterium smegmatis (strain ATCC 700084 / mc(2)155)</name>
    <name type="common">Mycobacterium smegmatis</name>
    <dbReference type="NCBI Taxonomy" id="246196"/>
    <lineage>
        <taxon>Bacteria</taxon>
        <taxon>Bacillati</taxon>
        <taxon>Actinomycetota</taxon>
        <taxon>Actinomycetes</taxon>
        <taxon>Mycobacteriales</taxon>
        <taxon>Mycobacteriaceae</taxon>
        <taxon>Mycolicibacterium</taxon>
    </lineage>
</organism>
<keyword id="KW-0143">Chaperone</keyword>
<keyword id="KW-0963">Cytoplasm</keyword>
<keyword id="KW-1185">Reference proteome</keyword>
<name>ESPG1_MYCS2</name>
<proteinExistence type="inferred from homology"/>
<evidence type="ECO:0000250" key="1">
    <source>
        <dbReference type="UniProtKB" id="B2HMS9"/>
    </source>
</evidence>
<evidence type="ECO:0000250" key="2">
    <source>
        <dbReference type="UniProtKB" id="B2HSU5"/>
    </source>
</evidence>
<evidence type="ECO:0000250" key="3">
    <source>
        <dbReference type="UniProtKB" id="L8FPI5"/>
    </source>
</evidence>
<evidence type="ECO:0000269" key="4">
    <source>
    </source>
</evidence>
<evidence type="ECO:0000303" key="5">
    <source>
    </source>
</evidence>
<evidence type="ECO:0000303" key="6">
    <source>
    </source>
</evidence>
<evidence type="ECO:0000305" key="7"/>
<evidence type="ECO:0000305" key="8">
    <source>
    </source>
</evidence>
<accession>A0QNI7</accession>
<accession>I7F4H5</accession>
<gene>
    <name evidence="6" type="primary">espG1</name>
    <name evidence="5" type="synonym">Sm3866</name>
    <name evidence="5" type="synonym">snm5</name>
    <name type="ordered locus">MSMEG_0057</name>
    <name type="ordered locus">MSMEI_0058</name>
</gene>
<dbReference type="EMBL" id="CP000480">
    <property type="protein sequence ID" value="ABK75056.1"/>
    <property type="molecule type" value="Genomic_DNA"/>
</dbReference>
<dbReference type="EMBL" id="CP001663">
    <property type="protein sequence ID" value="AFP36540.1"/>
    <property type="status" value="ALT_INIT"/>
    <property type="molecule type" value="Genomic_DNA"/>
</dbReference>
<dbReference type="RefSeq" id="WP_003891384.1">
    <property type="nucleotide sequence ID" value="NZ_SIJM01000058.1"/>
</dbReference>
<dbReference type="RefSeq" id="YP_884475.1">
    <property type="nucleotide sequence ID" value="NC_008596.1"/>
</dbReference>
<dbReference type="SMR" id="A0QNI7"/>
<dbReference type="STRING" id="246196.MSMEG_0057"/>
<dbReference type="PaxDb" id="246196-MSMEI_0058"/>
<dbReference type="KEGG" id="msb:LJ00_00285"/>
<dbReference type="KEGG" id="msg:MSMEI_0058"/>
<dbReference type="KEGG" id="msm:MSMEG_0057"/>
<dbReference type="PATRIC" id="fig|246196.19.peg.55"/>
<dbReference type="eggNOG" id="ENOG502ZNK2">
    <property type="taxonomic scope" value="Bacteria"/>
</dbReference>
<dbReference type="OrthoDB" id="4685535at2"/>
<dbReference type="Proteomes" id="UP000000757">
    <property type="component" value="Chromosome"/>
</dbReference>
<dbReference type="Proteomes" id="UP000006158">
    <property type="component" value="Chromosome"/>
</dbReference>
<dbReference type="GO" id="GO:0005737">
    <property type="term" value="C:cytoplasm"/>
    <property type="evidence" value="ECO:0007669"/>
    <property type="project" value="UniProtKB-SubCell"/>
</dbReference>
<dbReference type="InterPro" id="IPR025734">
    <property type="entry name" value="EspG"/>
</dbReference>
<dbReference type="Pfam" id="PF14011">
    <property type="entry name" value="ESX-1_EspG"/>
    <property type="match status" value="1"/>
</dbReference>
<comment type="function">
    <text evidence="1 3 4 8">Part of the ESX-1 / type VII specialized secretion system (T7SS), which exports several proteins including EsxA and EsxB (PubMed:15687187). Specific chaperone for cognate PE/PPE proteins, plays an important role in preventing aggregation of PE/PPE dimers (By similarity). Also plays a role in DNA conjugation, in at least recipient strain (By similarity).</text>
</comment>
<comment type="subunit">
    <text evidence="1">Interacts specifically with ESX-1-dependent PE/PPE proteins (By similarity).</text>
</comment>
<comment type="subcellular location">
    <subcellularLocation>
        <location evidence="2">Cytoplasm</location>
    </subcellularLocation>
</comment>
<comment type="disruption phenotype">
    <text evidence="4">EsxA and EsxB secretion severely reduced, but not their expression (PubMed:15687187).</text>
</comment>
<comment type="similarity">
    <text evidence="7">Belongs to the EspG family.</text>
</comment>
<comment type="sequence caution" evidence="7">
    <conflict type="erroneous initiation">
        <sequence resource="EMBL-CDS" id="AFP36540"/>
    </conflict>
    <text>Truncated N-terminus.</text>
</comment>
<reference key="1">
    <citation type="submission" date="2006-10" db="EMBL/GenBank/DDBJ databases">
        <authorList>
            <person name="Fleischmann R.D."/>
            <person name="Dodson R.J."/>
            <person name="Haft D.H."/>
            <person name="Merkel J.S."/>
            <person name="Nelson W.C."/>
            <person name="Fraser C.M."/>
        </authorList>
    </citation>
    <scope>NUCLEOTIDE SEQUENCE [LARGE SCALE GENOMIC DNA]</scope>
    <source>
        <strain>ATCC 700084 / mc(2)155</strain>
    </source>
</reference>
<reference key="2">
    <citation type="journal article" date="2007" name="Genome Biol.">
        <title>Interrupted coding sequences in Mycobacterium smegmatis: authentic mutations or sequencing errors?</title>
        <authorList>
            <person name="Deshayes C."/>
            <person name="Perrodou E."/>
            <person name="Gallien S."/>
            <person name="Euphrasie D."/>
            <person name="Schaeffer C."/>
            <person name="Van-Dorsselaer A."/>
            <person name="Poch O."/>
            <person name="Lecompte O."/>
            <person name="Reyrat J.-M."/>
        </authorList>
    </citation>
    <scope>NUCLEOTIDE SEQUENCE [LARGE SCALE GENOMIC DNA]</scope>
    <source>
        <strain>ATCC 700084 / mc(2)155</strain>
    </source>
</reference>
<reference key="3">
    <citation type="journal article" date="2009" name="Genome Res.">
        <title>Ortho-proteogenomics: multiple proteomes investigation through orthology and a new MS-based protocol.</title>
        <authorList>
            <person name="Gallien S."/>
            <person name="Perrodou E."/>
            <person name="Carapito C."/>
            <person name="Deshayes C."/>
            <person name="Reyrat J.-M."/>
            <person name="Van Dorsselaer A."/>
            <person name="Poch O."/>
            <person name="Schaeffer C."/>
            <person name="Lecompte O."/>
        </authorList>
    </citation>
    <scope>NUCLEOTIDE SEQUENCE [LARGE SCALE GENOMIC DNA]</scope>
    <source>
        <strain>ATCC 700084 / mc(2)155</strain>
    </source>
</reference>
<reference key="4">
    <citation type="journal article" date="2005" name="J. Bacteriol.">
        <title>A protein secretion pathway critical for Mycobacterium tuberculosis virulence is conserved and functional in Mycobacterium smegmatis.</title>
        <authorList>
            <person name="Converse S.E."/>
            <person name="Cox J.S."/>
        </authorList>
    </citation>
    <scope>FUNCTION</scope>
    <scope>DISRUPTION PHENOTYPE</scope>
    <source>
        <strain>ATCC 700084 / mc(2)155</strain>
    </source>
</reference>
<reference key="5">
    <citation type="journal article" date="2009" name="PLoS Pathog.">
        <title>Systematic genetic nomenclature for type VII secretion systems.</title>
        <authorList>
            <person name="Bitter W."/>
            <person name="Houben E.N."/>
            <person name="Bottai D."/>
            <person name="Brodin P."/>
            <person name="Brown E.J."/>
            <person name="Cox J.S."/>
            <person name="Derbyshire K."/>
            <person name="Fortune S.M."/>
            <person name="Gao L.Y."/>
            <person name="Liu J."/>
            <person name="Gey van Pittius N.C."/>
            <person name="Pym A.S."/>
            <person name="Rubin E.J."/>
            <person name="Sherman D.R."/>
            <person name="Cole S.T."/>
            <person name="Brosch R."/>
        </authorList>
    </citation>
    <scope>NOMENCLATURE</scope>
</reference>
<protein>
    <recommendedName>
        <fullName>ESX-1 secretion-associated protein EspG1</fullName>
    </recommendedName>
</protein>